<sequence>MITILGAGKVGMATAVMLMMRGYDDLLLIARTPGKPQGEALDLAHAAAELGVDIRISGSNSYEDMRGSDIVLVTAGIGRKPGMTREQLLEANANTMADLAEKIKAYAKDAIVVITTNPVDAMTYVMYKKTGFPRERVIGFSGILDSARMAYYISQKLGVSFKSVNAIVLGMHGQKMFPVPRLSSVGGVPLEHLMSKEEIEEVVSETVNAGAKITELRGYSSNYGPAAGLVLTVEAIKRDSKRIYPYSLYLQGEYGYNDIVAEVPAVIGKSGIERIIELPLTEDEKRKFDEAVQAVKKLVETLPPQLRE</sequence>
<name>MDH_AERPE</name>
<comment type="function">
    <text evidence="3">Catalyzes the reversible oxidation of malate to oxaloacetate. Can also oxidize tartrate. Can utilize both NAD and NADP. Catalytic efficiency for malate oxidation is 3-fold higher with NADP.</text>
</comment>
<comment type="catalytic activity">
    <reaction evidence="3">
        <text>(S)-malate + NADP(+) = oxaloacetate + NADPH + H(+)</text>
        <dbReference type="Rhea" id="RHEA:10824"/>
        <dbReference type="ChEBI" id="CHEBI:15378"/>
        <dbReference type="ChEBI" id="CHEBI:15589"/>
        <dbReference type="ChEBI" id="CHEBI:16452"/>
        <dbReference type="ChEBI" id="CHEBI:57783"/>
        <dbReference type="ChEBI" id="CHEBI:58349"/>
        <dbReference type="EC" id="1.1.1.299"/>
    </reaction>
</comment>
<comment type="catalytic activity">
    <reaction evidence="3">
        <text>(S)-malate + NAD(+) = oxaloacetate + NADH + H(+)</text>
        <dbReference type="Rhea" id="RHEA:21432"/>
        <dbReference type="ChEBI" id="CHEBI:15378"/>
        <dbReference type="ChEBI" id="CHEBI:15589"/>
        <dbReference type="ChEBI" id="CHEBI:16452"/>
        <dbReference type="ChEBI" id="CHEBI:57540"/>
        <dbReference type="ChEBI" id="CHEBI:57945"/>
        <dbReference type="EC" id="1.1.1.299"/>
    </reaction>
</comment>
<comment type="biophysicochemical properties">
    <kinetics>
        <KM evidence="3">0.12 mM for S-malate (in the presence of NAD)</KM>
        <KM evidence="3">0.019 mM for S-malate (in the presence of NADP)</KM>
        <KM evidence="3">1.2 mM for (2S,3S)-tartrate (in the presence of NAD)</KM>
        <KM evidence="3">23 mM for (2S,3S)-tartrate (in the presence of NADP)</KM>
        <KM evidence="3">0.2 mM for (2S,3R)-tartrate (in the presence of NAD)</KM>
        <KM evidence="3">5.8 mM for (2S,3R)-tartrate (in the presence of NADP)</KM>
        <KM evidence="3">0.87 mM for NAD (in the presence of malate)</KM>
        <KM evidence="3">0.0076 mM for NADP (in the presence of malate)</KM>
        <text evidence="3">kcat is 2.6 sec(-1) for NAD-dependent malate oxidation. kcat is 1.4 sec(-1) for NADP-dependent malate oxidation.</text>
    </kinetics>
    <phDependence>
        <text evidence="3">Optimum pH is 11 for malate oxidation.</text>
    </phDependence>
    <temperatureDependence>
        <text evidence="3">Optimum temperature is 95 degrees Celsius.</text>
    </temperatureDependence>
</comment>
<comment type="subunit">
    <text evidence="3">Homotetramer.</text>
</comment>
<comment type="miscellaneous">
    <text evidence="6">Ala at position 30 is responsible for coenzyme specificity. Asp or Glu is present at this position in most NAD-specific enzymes. The next residue, Arg, is important for NADP binding.</text>
</comment>
<comment type="similarity">
    <text evidence="5">Belongs to the LDH/MDH superfamily.</text>
</comment>
<feature type="chain" id="PRO_0000113479" description="Malate dehydrogenase">
    <location>
        <begin position="1"/>
        <end position="308"/>
    </location>
</feature>
<feature type="active site" description="Proton acceptor" evidence="1">
    <location>
        <position position="172"/>
    </location>
</feature>
<feature type="binding site" evidence="2">
    <location>
        <begin position="6"/>
        <end position="11"/>
    </location>
    <ligand>
        <name>NADP(+)</name>
        <dbReference type="ChEBI" id="CHEBI:58349"/>
    </ligand>
</feature>
<feature type="binding site" evidence="1">
    <location>
        <position position="79"/>
    </location>
    <ligand>
        <name>substrate</name>
    </ligand>
</feature>
<feature type="binding site" evidence="1">
    <location>
        <position position="85"/>
    </location>
    <ligand>
        <name>substrate</name>
    </ligand>
</feature>
<feature type="binding site" evidence="2">
    <location>
        <position position="92"/>
    </location>
    <ligand>
        <name>NADP(+)</name>
        <dbReference type="ChEBI" id="CHEBI:58349"/>
    </ligand>
</feature>
<feature type="binding site" evidence="2">
    <location>
        <begin position="115"/>
        <end position="117"/>
    </location>
    <ligand>
        <name>NADP(+)</name>
        <dbReference type="ChEBI" id="CHEBI:58349"/>
    </ligand>
</feature>
<feature type="binding site" evidence="1">
    <location>
        <position position="117"/>
    </location>
    <ligand>
        <name>substrate</name>
    </ligand>
</feature>
<feature type="binding site" evidence="1">
    <location>
        <position position="148"/>
    </location>
    <ligand>
        <name>substrate</name>
    </ligand>
</feature>
<feature type="strand" evidence="7">
    <location>
        <begin position="2"/>
        <end position="5"/>
    </location>
</feature>
<feature type="helix" evidence="7">
    <location>
        <begin position="9"/>
        <end position="21"/>
    </location>
</feature>
<feature type="strand" evidence="7">
    <location>
        <begin position="26"/>
        <end position="29"/>
    </location>
</feature>
<feature type="strand" evidence="7">
    <location>
        <begin position="31"/>
        <end position="34"/>
    </location>
</feature>
<feature type="helix" evidence="7">
    <location>
        <begin position="35"/>
        <end position="50"/>
    </location>
</feature>
<feature type="strand" evidence="7">
    <location>
        <begin position="56"/>
        <end position="60"/>
    </location>
</feature>
<feature type="helix" evidence="7">
    <location>
        <begin position="62"/>
        <end position="65"/>
    </location>
</feature>
<feature type="strand" evidence="7">
    <location>
        <begin position="69"/>
        <end position="73"/>
    </location>
</feature>
<feature type="helix" evidence="7">
    <location>
        <begin position="89"/>
        <end position="106"/>
    </location>
</feature>
<feature type="strand" evidence="7">
    <location>
        <begin position="111"/>
        <end position="114"/>
    </location>
</feature>
<feature type="strand" evidence="7">
    <location>
        <begin position="116"/>
        <end position="118"/>
    </location>
</feature>
<feature type="helix" evidence="7">
    <location>
        <begin position="119"/>
        <end position="130"/>
    </location>
</feature>
<feature type="helix" evidence="7">
    <location>
        <begin position="134"/>
        <end position="136"/>
    </location>
</feature>
<feature type="strand" evidence="7">
    <location>
        <begin position="137"/>
        <end position="139"/>
    </location>
</feature>
<feature type="helix" evidence="7">
    <location>
        <begin position="142"/>
        <end position="157"/>
    </location>
</feature>
<feature type="helix" evidence="7">
    <location>
        <begin position="161"/>
        <end position="163"/>
    </location>
</feature>
<feature type="strand" evidence="7">
    <location>
        <begin position="164"/>
        <end position="170"/>
    </location>
</feature>
<feature type="strand" evidence="7">
    <location>
        <begin position="177"/>
        <end position="185"/>
    </location>
</feature>
<feature type="helix" evidence="7">
    <location>
        <begin position="190"/>
        <end position="193"/>
    </location>
</feature>
<feature type="helix" evidence="7">
    <location>
        <begin position="196"/>
        <end position="207"/>
    </location>
</feature>
<feature type="helix" evidence="7">
    <location>
        <begin position="209"/>
        <end position="217"/>
    </location>
</feature>
<feature type="helix" evidence="7">
    <location>
        <begin position="223"/>
        <end position="237"/>
    </location>
</feature>
<feature type="strand" evidence="7">
    <location>
        <begin position="242"/>
        <end position="252"/>
    </location>
</feature>
<feature type="helix" evidence="7">
    <location>
        <begin position="253"/>
        <end position="255"/>
    </location>
</feature>
<feature type="strand" evidence="7">
    <location>
        <begin position="257"/>
        <end position="268"/>
    </location>
</feature>
<feature type="strand" evidence="7">
    <location>
        <begin position="271"/>
        <end position="275"/>
    </location>
</feature>
<feature type="helix" evidence="7">
    <location>
        <begin position="282"/>
        <end position="300"/>
    </location>
</feature>
<feature type="helix" evidence="7">
    <location>
        <begin position="304"/>
        <end position="307"/>
    </location>
</feature>
<dbReference type="EC" id="1.1.1.299" evidence="3"/>
<dbReference type="EMBL" id="BA000002">
    <property type="protein sequence ID" value="BAA79645.2"/>
    <property type="molecule type" value="Genomic_DNA"/>
</dbReference>
<dbReference type="PIR" id="E72655">
    <property type="entry name" value="E72655"/>
</dbReference>
<dbReference type="RefSeq" id="WP_010865893.1">
    <property type="nucleotide sequence ID" value="NC_000854.2"/>
</dbReference>
<dbReference type="PDB" id="2D4A">
    <property type="method" value="X-ray"/>
    <property type="resolution" value="2.87 A"/>
    <property type="chains" value="A/B/C/D=1-308"/>
</dbReference>
<dbReference type="PDBsum" id="2D4A"/>
<dbReference type="SMR" id="Q9YEA1"/>
<dbReference type="STRING" id="272557.APE_0672.1"/>
<dbReference type="EnsemblBacteria" id="BAA79645">
    <property type="protein sequence ID" value="BAA79645"/>
    <property type="gene ID" value="APE_0672.1"/>
</dbReference>
<dbReference type="GeneID" id="1444806"/>
<dbReference type="KEGG" id="ape:APE_0672.1"/>
<dbReference type="PATRIC" id="fig|272557.25.peg.482"/>
<dbReference type="eggNOG" id="arCOG00246">
    <property type="taxonomic scope" value="Archaea"/>
</dbReference>
<dbReference type="BRENDA" id="1.1.1.82">
    <property type="organism ID" value="171"/>
</dbReference>
<dbReference type="EvolutionaryTrace" id="Q9YEA1"/>
<dbReference type="Proteomes" id="UP000002518">
    <property type="component" value="Chromosome"/>
</dbReference>
<dbReference type="GO" id="GO:0004459">
    <property type="term" value="F:L-lactate dehydrogenase activity"/>
    <property type="evidence" value="ECO:0007669"/>
    <property type="project" value="TreeGrafter"/>
</dbReference>
<dbReference type="GO" id="GO:0030060">
    <property type="term" value="F:L-malate dehydrogenase (NAD+) activity"/>
    <property type="evidence" value="ECO:0007669"/>
    <property type="project" value="RHEA"/>
</dbReference>
<dbReference type="GO" id="GO:0046554">
    <property type="term" value="F:L-malate dehydrogenase (NADP+) activity"/>
    <property type="evidence" value="ECO:0007669"/>
    <property type="project" value="RHEA"/>
</dbReference>
<dbReference type="GO" id="GO:0006089">
    <property type="term" value="P:lactate metabolic process"/>
    <property type="evidence" value="ECO:0007669"/>
    <property type="project" value="TreeGrafter"/>
</dbReference>
<dbReference type="GO" id="GO:0006099">
    <property type="term" value="P:tricarboxylic acid cycle"/>
    <property type="evidence" value="ECO:0007669"/>
    <property type="project" value="UniProtKB-KW"/>
</dbReference>
<dbReference type="CDD" id="cd01339">
    <property type="entry name" value="LDH-like_MDH"/>
    <property type="match status" value="1"/>
</dbReference>
<dbReference type="FunFam" id="3.40.50.720:FF:000018">
    <property type="entry name" value="Malate dehydrogenase"/>
    <property type="match status" value="1"/>
</dbReference>
<dbReference type="Gene3D" id="3.90.110.10">
    <property type="entry name" value="Lactate dehydrogenase/glycoside hydrolase, family 4, C-terminal"/>
    <property type="match status" value="1"/>
</dbReference>
<dbReference type="Gene3D" id="3.40.50.720">
    <property type="entry name" value="NAD(P)-binding Rossmann-like Domain"/>
    <property type="match status" value="1"/>
</dbReference>
<dbReference type="InterPro" id="IPR001557">
    <property type="entry name" value="L-lactate/malate_DH"/>
</dbReference>
<dbReference type="InterPro" id="IPR022383">
    <property type="entry name" value="Lactate/malate_DH_C"/>
</dbReference>
<dbReference type="InterPro" id="IPR001236">
    <property type="entry name" value="Lactate/malate_DH_N"/>
</dbReference>
<dbReference type="InterPro" id="IPR015955">
    <property type="entry name" value="Lactate_DH/Glyco_Ohase_4_C"/>
</dbReference>
<dbReference type="InterPro" id="IPR011275">
    <property type="entry name" value="Malate_DH_type3"/>
</dbReference>
<dbReference type="InterPro" id="IPR036291">
    <property type="entry name" value="NAD(P)-bd_dom_sf"/>
</dbReference>
<dbReference type="NCBIfam" id="NF004863">
    <property type="entry name" value="PRK06223.1"/>
    <property type="match status" value="1"/>
</dbReference>
<dbReference type="PANTHER" id="PTHR43128">
    <property type="entry name" value="L-2-HYDROXYCARBOXYLATE DEHYDROGENASE (NAD(P)(+))"/>
    <property type="match status" value="1"/>
</dbReference>
<dbReference type="PANTHER" id="PTHR43128:SF16">
    <property type="entry name" value="L-LACTATE DEHYDROGENASE"/>
    <property type="match status" value="1"/>
</dbReference>
<dbReference type="Pfam" id="PF02866">
    <property type="entry name" value="Ldh_1_C"/>
    <property type="match status" value="1"/>
</dbReference>
<dbReference type="Pfam" id="PF00056">
    <property type="entry name" value="Ldh_1_N"/>
    <property type="match status" value="1"/>
</dbReference>
<dbReference type="PIRSF" id="PIRSF000102">
    <property type="entry name" value="Lac_mal_DH"/>
    <property type="match status" value="1"/>
</dbReference>
<dbReference type="PRINTS" id="PR00086">
    <property type="entry name" value="LLDHDRGNASE"/>
</dbReference>
<dbReference type="SUPFAM" id="SSF56327">
    <property type="entry name" value="LDH C-terminal domain-like"/>
    <property type="match status" value="1"/>
</dbReference>
<dbReference type="SUPFAM" id="SSF51735">
    <property type="entry name" value="NAD(P)-binding Rossmann-fold domains"/>
    <property type="match status" value="1"/>
</dbReference>
<keyword id="KW-0002">3D-structure</keyword>
<keyword id="KW-0520">NAD</keyword>
<keyword id="KW-0521">NADP</keyword>
<keyword id="KW-0560">Oxidoreductase</keyword>
<keyword id="KW-1185">Reference proteome</keyword>
<keyword id="KW-0816">Tricarboxylic acid cycle</keyword>
<gene>
    <name type="primary">mdh</name>
    <name type="ordered locus">APE_0672.1</name>
</gene>
<proteinExistence type="evidence at protein level"/>
<organism>
    <name type="scientific">Aeropyrum pernix (strain ATCC 700893 / DSM 11879 / JCM 9820 / NBRC 100138 / K1)</name>
    <dbReference type="NCBI Taxonomy" id="272557"/>
    <lineage>
        <taxon>Archaea</taxon>
        <taxon>Thermoproteota</taxon>
        <taxon>Thermoprotei</taxon>
        <taxon>Desulfurococcales</taxon>
        <taxon>Desulfurococcaceae</taxon>
        <taxon>Aeropyrum</taxon>
    </lineage>
</organism>
<evidence type="ECO:0000250" key="1">
    <source>
        <dbReference type="UniProtKB" id="P61889"/>
    </source>
</evidence>
<evidence type="ECO:0000250" key="2">
    <source>
        <dbReference type="UniProtKB" id="Q60176"/>
    </source>
</evidence>
<evidence type="ECO:0000269" key="3">
    <source>
    </source>
</evidence>
<evidence type="ECO:0000303" key="4">
    <source>
    </source>
</evidence>
<evidence type="ECO:0000305" key="5"/>
<evidence type="ECO:0000305" key="6">
    <source>
    </source>
</evidence>
<evidence type="ECO:0007829" key="7">
    <source>
        <dbReference type="PDB" id="2D4A"/>
    </source>
</evidence>
<reference key="1">
    <citation type="journal article" date="1999" name="DNA Res.">
        <title>Complete genome sequence of an aerobic hyper-thermophilic crenarchaeon, Aeropyrum pernix K1.</title>
        <authorList>
            <person name="Kawarabayasi Y."/>
            <person name="Hino Y."/>
            <person name="Horikawa H."/>
            <person name="Yamazaki S."/>
            <person name="Haikawa Y."/>
            <person name="Jin-no K."/>
            <person name="Takahashi M."/>
            <person name="Sekine M."/>
            <person name="Baba S."/>
            <person name="Ankai A."/>
            <person name="Kosugi H."/>
            <person name="Hosoyama A."/>
            <person name="Fukui S."/>
            <person name="Nagai Y."/>
            <person name="Nishijima K."/>
            <person name="Nakazawa H."/>
            <person name="Takamiya M."/>
            <person name="Masuda S."/>
            <person name="Funahashi T."/>
            <person name="Tanaka T."/>
            <person name="Kudoh Y."/>
            <person name="Yamazaki J."/>
            <person name="Kushida N."/>
            <person name="Oguchi A."/>
            <person name="Aoki K."/>
            <person name="Kubota K."/>
            <person name="Nakamura Y."/>
            <person name="Nomura N."/>
            <person name="Sako Y."/>
            <person name="Kikuchi H."/>
        </authorList>
    </citation>
    <scope>NUCLEOTIDE SEQUENCE [LARGE SCALE GENOMIC DNA]</scope>
    <source>
        <strain>ATCC 700893 / DSM 11879 / JCM 9820 / NBRC 100138 / K1</strain>
    </source>
</reference>
<reference key="2">
    <citation type="journal article" date="2009" name="Biochim. Biophys. Acta">
        <title>Refolding, characterization and crystal structure of (S)-malate dehydrogenase from the hyperthermophilic archaeon Aeropyrum pernix.</title>
        <authorList>
            <person name="Kawakami R."/>
            <person name="Sakuraba H."/>
            <person name="Goda S."/>
            <person name="Tsuge H."/>
            <person name="Ohshima T."/>
        </authorList>
    </citation>
    <scope>X-RAY CRYSTALLOGRAPHY (2.87 ANGSTROMS)</scope>
    <scope>FUNCTION</scope>
    <scope>CATALYTIC ACTIVITY</scope>
    <scope>BIOPHYSICOCHEMICAL PROPERTIES</scope>
    <scope>SUBUNIT</scope>
</reference>
<protein>
    <recommendedName>
        <fullName evidence="4">Malate dehydrogenase</fullName>
        <ecNumber evidence="3">1.1.1.299</ecNumber>
    </recommendedName>
</protein>
<accession>Q9YEA1</accession>